<accession>P9WNP6</accession>
<accession>L0T3U3</accession>
<accession>O53753</accession>
<accession>Q7D9R6</accession>
<keyword id="KW-0276">Fatty acid metabolism</keyword>
<keyword id="KW-0443">Lipid metabolism</keyword>
<keyword id="KW-0521">NADP</keyword>
<keyword id="KW-0560">Oxidoreductase</keyword>
<keyword id="KW-1185">Reference proteome</keyword>
<feature type="chain" id="PRO_0000427090" description="3-hydroxybutyryl-CoA dehydrogenase">
    <location>
        <begin position="1"/>
        <end position="286"/>
    </location>
</feature>
<feature type="site" description="Important for catalytic activity" evidence="1">
    <location>
        <position position="143"/>
    </location>
</feature>
<sequence length="286" mass="30728">MSDAIQRVGVVGAGQMGSGIAEVSARAGVEVTVFEPAEALITAGRNRIVKSLERAVSAGKVTERERDRALGLLTFTTDLNDLSDRQLVIEAVVEDEAVKSEIFAELDRVVTDPDAVLASNTSSIPIMKVAAATKQPQRVLGLHFFNPVPVLPLVELVRTLVTDEAAAARTEEFASTVLGKQVVRCSDRSGFVVNALLVPYLLSAIRMVEAGFATVEDVDKAVVAGLSHPMGPLRLSDLVGLDTLKLIADKMFEEFKEPHYGPPPLLLRMVEAGQLGKKSGRGFYTY</sequence>
<name>FADB2_MYCTO</name>
<dbReference type="EC" id="1.1.1.157" evidence="2"/>
<dbReference type="EMBL" id="AE000516">
    <property type="protein sequence ID" value="AAK44708.1"/>
    <property type="molecule type" value="Genomic_DNA"/>
</dbReference>
<dbReference type="PIR" id="H70828">
    <property type="entry name" value="H70828"/>
</dbReference>
<dbReference type="RefSeq" id="WP_003402318.1">
    <property type="nucleotide sequence ID" value="NZ_KK341227.1"/>
</dbReference>
<dbReference type="SMR" id="P9WNP6"/>
<dbReference type="GeneID" id="45424430"/>
<dbReference type="KEGG" id="mtc:MT0484"/>
<dbReference type="PATRIC" id="fig|83331.31.peg.514"/>
<dbReference type="HOGENOM" id="CLU_009834_2_0_11"/>
<dbReference type="UniPathway" id="UPA00863"/>
<dbReference type="Proteomes" id="UP000001020">
    <property type="component" value="Chromosome"/>
</dbReference>
<dbReference type="GO" id="GO:0008691">
    <property type="term" value="F:3-hydroxybutyryl-CoA dehydrogenase activity"/>
    <property type="evidence" value="ECO:0007669"/>
    <property type="project" value="UniProtKB-EC"/>
</dbReference>
<dbReference type="GO" id="GO:0070403">
    <property type="term" value="F:NAD+ binding"/>
    <property type="evidence" value="ECO:0007669"/>
    <property type="project" value="InterPro"/>
</dbReference>
<dbReference type="GO" id="GO:0019605">
    <property type="term" value="P:butyrate metabolic process"/>
    <property type="evidence" value="ECO:0007669"/>
    <property type="project" value="UniProtKB-UniPathway"/>
</dbReference>
<dbReference type="GO" id="GO:0006635">
    <property type="term" value="P:fatty acid beta-oxidation"/>
    <property type="evidence" value="ECO:0007669"/>
    <property type="project" value="TreeGrafter"/>
</dbReference>
<dbReference type="FunFam" id="1.10.1040.10:FF:000019">
    <property type="entry name" value="3-hydroxybutyryl-CoA dehydrogenase FadB2"/>
    <property type="match status" value="1"/>
</dbReference>
<dbReference type="FunFam" id="3.40.50.720:FF:000009">
    <property type="entry name" value="Fatty oxidation complex, alpha subunit"/>
    <property type="match status" value="1"/>
</dbReference>
<dbReference type="Gene3D" id="1.10.1040.10">
    <property type="entry name" value="N-(1-d-carboxylethyl)-l-norvaline Dehydrogenase, domain 2"/>
    <property type="match status" value="1"/>
</dbReference>
<dbReference type="Gene3D" id="3.40.50.720">
    <property type="entry name" value="NAD(P)-binding Rossmann-like Domain"/>
    <property type="match status" value="1"/>
</dbReference>
<dbReference type="InterPro" id="IPR022694">
    <property type="entry name" value="3-OHacyl-CoA_DH"/>
</dbReference>
<dbReference type="InterPro" id="IPR006176">
    <property type="entry name" value="3-OHacyl-CoA_DH_NAD-bd"/>
</dbReference>
<dbReference type="InterPro" id="IPR006108">
    <property type="entry name" value="3HC_DH_C"/>
</dbReference>
<dbReference type="InterPro" id="IPR008927">
    <property type="entry name" value="6-PGluconate_DH-like_C_sf"/>
</dbReference>
<dbReference type="InterPro" id="IPR013328">
    <property type="entry name" value="6PGD_dom2"/>
</dbReference>
<dbReference type="InterPro" id="IPR036291">
    <property type="entry name" value="NAD(P)-bd_dom_sf"/>
</dbReference>
<dbReference type="NCBIfam" id="NF005875">
    <property type="entry name" value="PRK07819.1"/>
    <property type="match status" value="1"/>
</dbReference>
<dbReference type="PANTHER" id="PTHR48075">
    <property type="entry name" value="3-HYDROXYACYL-COA DEHYDROGENASE FAMILY PROTEIN"/>
    <property type="match status" value="1"/>
</dbReference>
<dbReference type="PANTHER" id="PTHR48075:SF9">
    <property type="entry name" value="3-HYDROXYBUTYRYL-COA DEHYDROGENASE"/>
    <property type="match status" value="1"/>
</dbReference>
<dbReference type="Pfam" id="PF00725">
    <property type="entry name" value="3HCDH"/>
    <property type="match status" value="1"/>
</dbReference>
<dbReference type="Pfam" id="PF02737">
    <property type="entry name" value="3HCDH_N"/>
    <property type="match status" value="1"/>
</dbReference>
<dbReference type="PIRSF" id="PIRSF000105">
    <property type="entry name" value="HCDH"/>
    <property type="match status" value="1"/>
</dbReference>
<dbReference type="SUPFAM" id="SSF48179">
    <property type="entry name" value="6-phosphogluconate dehydrogenase C-terminal domain-like"/>
    <property type="match status" value="1"/>
</dbReference>
<dbReference type="SUPFAM" id="SSF51735">
    <property type="entry name" value="NAD(P)-binding Rossmann-fold domains"/>
    <property type="match status" value="1"/>
</dbReference>
<protein>
    <recommendedName>
        <fullName>3-hydroxybutyryl-CoA dehydrogenase</fullName>
        <ecNumber evidence="2">1.1.1.157</ecNumber>
    </recommendedName>
    <alternativeName>
        <fullName>Beta-hydroxybutyryl-CoA dehydrogenase</fullName>
        <shortName>BHBD</shortName>
    </alternativeName>
</protein>
<reference key="1">
    <citation type="journal article" date="2002" name="J. Bacteriol.">
        <title>Whole-genome comparison of Mycobacterium tuberculosis clinical and laboratory strains.</title>
        <authorList>
            <person name="Fleischmann R.D."/>
            <person name="Alland D."/>
            <person name="Eisen J.A."/>
            <person name="Carpenter L."/>
            <person name="White O."/>
            <person name="Peterson J.D."/>
            <person name="DeBoy R.T."/>
            <person name="Dodson R.J."/>
            <person name="Gwinn M.L."/>
            <person name="Haft D.H."/>
            <person name="Hickey E.K."/>
            <person name="Kolonay J.F."/>
            <person name="Nelson W.C."/>
            <person name="Umayam L.A."/>
            <person name="Ermolaeva M.D."/>
            <person name="Salzberg S.L."/>
            <person name="Delcher A."/>
            <person name="Utterback T.R."/>
            <person name="Weidman J.F."/>
            <person name="Khouri H.M."/>
            <person name="Gill J."/>
            <person name="Mikula A."/>
            <person name="Bishai W."/>
            <person name="Jacobs W.R. Jr."/>
            <person name="Venter J.C."/>
            <person name="Fraser C.M."/>
        </authorList>
    </citation>
    <scope>NUCLEOTIDE SEQUENCE [LARGE SCALE GENOMIC DNA]</scope>
    <source>
        <strain>CDC 1551 / Oshkosh</strain>
    </source>
</reference>
<evidence type="ECO:0000250" key="1"/>
<evidence type="ECO:0000250" key="2">
    <source>
        <dbReference type="UniProtKB" id="P9WNP7"/>
    </source>
</evidence>
<evidence type="ECO:0000305" key="3"/>
<gene>
    <name type="primary">fadB2</name>
    <name type="ordered locus">MT0484</name>
</gene>
<proteinExistence type="inferred from homology"/>
<comment type="catalytic activity">
    <reaction evidence="2">
        <text>3-hydroxybutanoyl-CoA + NAD(+) = acetoacetyl-CoA + NADH + H(+)</text>
        <dbReference type="Rhea" id="RHEA:42048"/>
        <dbReference type="ChEBI" id="CHEBI:15378"/>
        <dbReference type="ChEBI" id="CHEBI:57286"/>
        <dbReference type="ChEBI" id="CHEBI:57540"/>
        <dbReference type="ChEBI" id="CHEBI:57945"/>
        <dbReference type="ChEBI" id="CHEBI:78611"/>
    </reaction>
</comment>
<comment type="catalytic activity">
    <reaction evidence="2">
        <text>(3S)-3-hydroxybutanoyl-CoA + NADP(+) = acetoacetyl-CoA + NADPH + H(+)</text>
        <dbReference type="Rhea" id="RHEA:16197"/>
        <dbReference type="ChEBI" id="CHEBI:15378"/>
        <dbReference type="ChEBI" id="CHEBI:57286"/>
        <dbReference type="ChEBI" id="CHEBI:57316"/>
        <dbReference type="ChEBI" id="CHEBI:57783"/>
        <dbReference type="ChEBI" id="CHEBI:58349"/>
        <dbReference type="EC" id="1.1.1.157"/>
    </reaction>
</comment>
<comment type="pathway">
    <text>Lipid metabolism; butanoate metabolism.</text>
</comment>
<comment type="similarity">
    <text evidence="3">Belongs to the 3-hydroxyacyl-CoA dehydrogenase family.</text>
</comment>
<organism>
    <name type="scientific">Mycobacterium tuberculosis (strain CDC 1551 / Oshkosh)</name>
    <dbReference type="NCBI Taxonomy" id="83331"/>
    <lineage>
        <taxon>Bacteria</taxon>
        <taxon>Bacillati</taxon>
        <taxon>Actinomycetota</taxon>
        <taxon>Actinomycetes</taxon>
        <taxon>Mycobacteriales</taxon>
        <taxon>Mycobacteriaceae</taxon>
        <taxon>Mycobacterium</taxon>
        <taxon>Mycobacterium tuberculosis complex</taxon>
    </lineage>
</organism>